<feature type="chain" id="PRO_0000407035" description="Transcriptional activator of proteases prtT">
    <location>
        <begin position="1"/>
        <end position="660"/>
    </location>
</feature>
<feature type="DNA-binding region" description="Zn(2)-C6 fungal-type" evidence="2">
    <location>
        <begin position="38"/>
        <end position="67"/>
    </location>
</feature>
<feature type="region of interest" description="Disordered" evidence="3">
    <location>
        <begin position="1"/>
        <end position="28"/>
    </location>
</feature>
<feature type="region of interest" description="Disordered" evidence="3">
    <location>
        <begin position="112"/>
        <end position="163"/>
    </location>
</feature>
<feature type="compositionally biased region" description="Basic and acidic residues" evidence="3">
    <location>
        <begin position="13"/>
        <end position="28"/>
    </location>
</feature>
<feature type="compositionally biased region" description="Polar residues" evidence="3">
    <location>
        <begin position="130"/>
        <end position="141"/>
    </location>
</feature>
<comment type="function">
    <text evidence="1">Transcription factor required for protein utilization and degradation. Regulates transcription of major secreted proteases (By similarity).</text>
</comment>
<comment type="subcellular location">
    <subcellularLocation>
        <location evidence="2">Nucleus</location>
    </subcellularLocation>
</comment>
<comment type="similarity">
    <text evidence="4">Belongs to the prtT family.</text>
</comment>
<dbReference type="EMBL" id="AACD01000051">
    <property type="protein sequence ID" value="EAA63691.1"/>
    <property type="molecule type" value="Genomic_DNA"/>
</dbReference>
<dbReference type="EMBL" id="BN001306">
    <property type="protein sequence ID" value="CBF83371.1"/>
    <property type="molecule type" value="Genomic_DNA"/>
</dbReference>
<dbReference type="RefSeq" id="XP_660724.1">
    <property type="nucleotide sequence ID" value="XM_655632.1"/>
</dbReference>
<dbReference type="EnsemblFungi" id="CBF83371">
    <property type="protein sequence ID" value="CBF83371"/>
    <property type="gene ID" value="ANIA_03120"/>
</dbReference>
<dbReference type="KEGG" id="ani:ANIA_03120"/>
<dbReference type="eggNOG" id="ENOG502QW6D">
    <property type="taxonomic scope" value="Eukaryota"/>
</dbReference>
<dbReference type="HOGENOM" id="CLU_011003_0_1_1"/>
<dbReference type="InParanoid" id="Q5B8L0"/>
<dbReference type="OMA" id="RCYSEYV"/>
<dbReference type="OrthoDB" id="4060227at2759"/>
<dbReference type="Proteomes" id="UP000000560">
    <property type="component" value="Chromosome VI"/>
</dbReference>
<dbReference type="GO" id="GO:0005634">
    <property type="term" value="C:nucleus"/>
    <property type="evidence" value="ECO:0007669"/>
    <property type="project" value="UniProtKB-SubCell"/>
</dbReference>
<dbReference type="GO" id="GO:0003677">
    <property type="term" value="F:DNA binding"/>
    <property type="evidence" value="ECO:0007669"/>
    <property type="project" value="UniProtKB-KW"/>
</dbReference>
<dbReference type="GO" id="GO:0000981">
    <property type="term" value="F:DNA-binding transcription factor activity, RNA polymerase II-specific"/>
    <property type="evidence" value="ECO:0007669"/>
    <property type="project" value="InterPro"/>
</dbReference>
<dbReference type="GO" id="GO:0008270">
    <property type="term" value="F:zinc ion binding"/>
    <property type="evidence" value="ECO:0007669"/>
    <property type="project" value="InterPro"/>
</dbReference>
<dbReference type="GO" id="GO:0006351">
    <property type="term" value="P:DNA-templated transcription"/>
    <property type="evidence" value="ECO:0007669"/>
    <property type="project" value="InterPro"/>
</dbReference>
<dbReference type="CDD" id="cd12148">
    <property type="entry name" value="fungal_TF_MHR"/>
    <property type="match status" value="1"/>
</dbReference>
<dbReference type="CDD" id="cd00067">
    <property type="entry name" value="GAL4"/>
    <property type="match status" value="1"/>
</dbReference>
<dbReference type="Gene3D" id="4.10.240.10">
    <property type="entry name" value="Zn(2)-C6 fungal-type DNA-binding domain"/>
    <property type="match status" value="1"/>
</dbReference>
<dbReference type="InterPro" id="IPR051089">
    <property type="entry name" value="prtT"/>
</dbReference>
<dbReference type="InterPro" id="IPR007219">
    <property type="entry name" value="Transcription_factor_dom_fun"/>
</dbReference>
<dbReference type="InterPro" id="IPR036864">
    <property type="entry name" value="Zn2-C6_fun-type_DNA-bd_sf"/>
</dbReference>
<dbReference type="InterPro" id="IPR001138">
    <property type="entry name" value="Zn2Cys6_DnaBD"/>
</dbReference>
<dbReference type="PANTHER" id="PTHR31845">
    <property type="entry name" value="FINGER DOMAIN PROTEIN, PUTATIVE-RELATED"/>
    <property type="match status" value="1"/>
</dbReference>
<dbReference type="PANTHER" id="PTHR31845:SF17">
    <property type="entry name" value="ZN(II)2CYS6 TRANSCRIPTION FACTOR (EUROFUNG)"/>
    <property type="match status" value="1"/>
</dbReference>
<dbReference type="Pfam" id="PF04082">
    <property type="entry name" value="Fungal_trans"/>
    <property type="match status" value="1"/>
</dbReference>
<dbReference type="Pfam" id="PF00172">
    <property type="entry name" value="Zn_clus"/>
    <property type="match status" value="1"/>
</dbReference>
<dbReference type="SMART" id="SM00906">
    <property type="entry name" value="Fungal_trans"/>
    <property type="match status" value="1"/>
</dbReference>
<dbReference type="SMART" id="SM00066">
    <property type="entry name" value="GAL4"/>
    <property type="match status" value="1"/>
</dbReference>
<dbReference type="SUPFAM" id="SSF57701">
    <property type="entry name" value="Zn2/Cys6 DNA-binding domain"/>
    <property type="match status" value="1"/>
</dbReference>
<dbReference type="PROSITE" id="PS00463">
    <property type="entry name" value="ZN2_CY6_FUNGAL_1"/>
    <property type="match status" value="1"/>
</dbReference>
<dbReference type="PROSITE" id="PS50048">
    <property type="entry name" value="ZN2_CY6_FUNGAL_2"/>
    <property type="match status" value="1"/>
</dbReference>
<proteinExistence type="inferred from homology"/>
<gene>
    <name type="primary">prtT</name>
    <name type="ORF">AN3120</name>
</gene>
<protein>
    <recommendedName>
        <fullName>Transcriptional activator of proteases prtT</fullName>
    </recommendedName>
    <alternativeName>
        <fullName>Zn(2)-C6 zinc finger-containing protein prtT</fullName>
    </alternativeName>
</protein>
<keyword id="KW-0238">DNA-binding</keyword>
<keyword id="KW-0479">Metal-binding</keyword>
<keyword id="KW-0539">Nucleus</keyword>
<keyword id="KW-1185">Reference proteome</keyword>
<keyword id="KW-0804">Transcription</keyword>
<keyword id="KW-0805">Transcription regulation</keyword>
<keyword id="KW-0862">Zinc</keyword>
<evidence type="ECO:0000250" key="1"/>
<evidence type="ECO:0000255" key="2">
    <source>
        <dbReference type="PROSITE-ProRule" id="PRU00227"/>
    </source>
</evidence>
<evidence type="ECO:0000256" key="3">
    <source>
        <dbReference type="SAM" id="MobiDB-lite"/>
    </source>
</evidence>
<evidence type="ECO:0000305" key="4"/>
<reference key="1">
    <citation type="journal article" date="2005" name="Nature">
        <title>Sequencing of Aspergillus nidulans and comparative analysis with A. fumigatus and A. oryzae.</title>
        <authorList>
            <person name="Galagan J.E."/>
            <person name="Calvo S.E."/>
            <person name="Cuomo C."/>
            <person name="Ma L.-J."/>
            <person name="Wortman J.R."/>
            <person name="Batzoglou S."/>
            <person name="Lee S.-I."/>
            <person name="Bastuerkmen M."/>
            <person name="Spevak C.C."/>
            <person name="Clutterbuck J."/>
            <person name="Kapitonov V."/>
            <person name="Jurka J."/>
            <person name="Scazzocchio C."/>
            <person name="Farman M.L."/>
            <person name="Butler J."/>
            <person name="Purcell S."/>
            <person name="Harris S."/>
            <person name="Braus G.H."/>
            <person name="Draht O."/>
            <person name="Busch S."/>
            <person name="D'Enfert C."/>
            <person name="Bouchier C."/>
            <person name="Goldman G.H."/>
            <person name="Bell-Pedersen D."/>
            <person name="Griffiths-Jones S."/>
            <person name="Doonan J.H."/>
            <person name="Yu J."/>
            <person name="Vienken K."/>
            <person name="Pain A."/>
            <person name="Freitag M."/>
            <person name="Selker E.U."/>
            <person name="Archer D.B."/>
            <person name="Penalva M.A."/>
            <person name="Oakley B.R."/>
            <person name="Momany M."/>
            <person name="Tanaka T."/>
            <person name="Kumagai T."/>
            <person name="Asai K."/>
            <person name="Machida M."/>
            <person name="Nierman W.C."/>
            <person name="Denning D.W."/>
            <person name="Caddick M.X."/>
            <person name="Hynes M."/>
            <person name="Paoletti M."/>
            <person name="Fischer R."/>
            <person name="Miller B.L."/>
            <person name="Dyer P.S."/>
            <person name="Sachs M.S."/>
            <person name="Osmani S.A."/>
            <person name="Birren B.W."/>
        </authorList>
    </citation>
    <scope>NUCLEOTIDE SEQUENCE [LARGE SCALE GENOMIC DNA]</scope>
    <source>
        <strain>FGSC A4 / ATCC 38163 / CBS 112.46 / NRRL 194 / M139</strain>
    </source>
</reference>
<reference key="2">
    <citation type="journal article" date="2009" name="Fungal Genet. Biol.">
        <title>The 2008 update of the Aspergillus nidulans genome annotation: a community effort.</title>
        <authorList>
            <person name="Wortman J.R."/>
            <person name="Gilsenan J.M."/>
            <person name="Joardar V."/>
            <person name="Deegan J."/>
            <person name="Clutterbuck J."/>
            <person name="Andersen M.R."/>
            <person name="Archer D."/>
            <person name="Bencina M."/>
            <person name="Braus G."/>
            <person name="Coutinho P."/>
            <person name="von Dohren H."/>
            <person name="Doonan J."/>
            <person name="Driessen A.J."/>
            <person name="Durek P."/>
            <person name="Espeso E."/>
            <person name="Fekete E."/>
            <person name="Flipphi M."/>
            <person name="Estrada C.G."/>
            <person name="Geysens S."/>
            <person name="Goldman G."/>
            <person name="de Groot P.W."/>
            <person name="Hansen K."/>
            <person name="Harris S.D."/>
            <person name="Heinekamp T."/>
            <person name="Helmstaedt K."/>
            <person name="Henrissat B."/>
            <person name="Hofmann G."/>
            <person name="Homan T."/>
            <person name="Horio T."/>
            <person name="Horiuchi H."/>
            <person name="James S."/>
            <person name="Jones M."/>
            <person name="Karaffa L."/>
            <person name="Karanyi Z."/>
            <person name="Kato M."/>
            <person name="Keller N."/>
            <person name="Kelly D.E."/>
            <person name="Kiel J.A."/>
            <person name="Kim J.M."/>
            <person name="van der Klei I.J."/>
            <person name="Klis F.M."/>
            <person name="Kovalchuk A."/>
            <person name="Krasevec N."/>
            <person name="Kubicek C.P."/>
            <person name="Liu B."/>
            <person name="Maccabe A."/>
            <person name="Meyer V."/>
            <person name="Mirabito P."/>
            <person name="Miskei M."/>
            <person name="Mos M."/>
            <person name="Mullins J."/>
            <person name="Nelson D.R."/>
            <person name="Nielsen J."/>
            <person name="Oakley B.R."/>
            <person name="Osmani S.A."/>
            <person name="Pakula T."/>
            <person name="Paszewski A."/>
            <person name="Paulsen I."/>
            <person name="Pilsyk S."/>
            <person name="Pocsi I."/>
            <person name="Punt P.J."/>
            <person name="Ram A.F."/>
            <person name="Ren Q."/>
            <person name="Robellet X."/>
            <person name="Robson G."/>
            <person name="Seiboth B."/>
            <person name="van Solingen P."/>
            <person name="Specht T."/>
            <person name="Sun J."/>
            <person name="Taheri-Talesh N."/>
            <person name="Takeshita N."/>
            <person name="Ussery D."/>
            <person name="vanKuyk P.A."/>
            <person name="Visser H."/>
            <person name="van de Vondervoort P.J."/>
            <person name="de Vries R.P."/>
            <person name="Walton J."/>
            <person name="Xiang X."/>
            <person name="Xiong Y."/>
            <person name="Zeng A.P."/>
            <person name="Brandt B.W."/>
            <person name="Cornell M.J."/>
            <person name="van den Hondel C.A."/>
            <person name="Visser J."/>
            <person name="Oliver S.G."/>
            <person name="Turner G."/>
        </authorList>
    </citation>
    <scope>GENOME REANNOTATION</scope>
    <source>
        <strain>FGSC A4 / ATCC 38163 / CBS 112.46 / NRRL 194 / M139</strain>
    </source>
</reference>
<sequence length="660" mass="73604">MKRSSFDAGLDGRQQDRRHSAVPDERPTPLKISKARACAECKRHKIRCEFRPGETSCTKCLRSGIKCVVNDFSQKFVDDDGVWKARASATIQQLQAAVSHLLRQNGLPELSTYTVGDSPNGPSPAAPSYHTGNRHSMNGSPSDVKPDGPGLVVTREPSQEPDLQDRELVPAPMRSLYEVTKLRDLRHNHIEQPKSTLLEEDFLSRGLISLQEAEELFAYFSRTMNQLLWGGIILVHRDLTSVRRASSLLAAAVLTVAALHIPNRTETLNLCYSEYVSLVSSMSLTRAHTLDDVRALCVGAFWLSELSWKLSGHAVRIATELGLHQSYQKMIRGHSDQYERAQLWYLLYVCDHHFSIAYGRPPVIHEDQAIKNYETFLQAPMVVPGDIRLLAQVALFMILTEAYRTFGSDTEQALTEEDFGQLRVFNVAIDQWRLLWQPRSEYLTLAAADSPYVRTYPSKGVVLHYHFAKFQLNSLSLRALSPTNTPVFSMDRKESANIAISSAMACLNMVLEEQDIRDAIVGVPIFTHTMVTFSALFLLKVAVNWNSAYLSLDSGLVRSLVERVIELLNCVSAGERHLTRHIARGLSKMLERFDSWDMSNGVPAGTVGERAGSGVPGGANAMAQGFPPPDLIYDMVGTYGFGLDENLLDPSMANFEYLAQ</sequence>
<name>PRTT_EMENI</name>
<organism>
    <name type="scientific">Emericella nidulans (strain FGSC A4 / ATCC 38163 / CBS 112.46 / NRRL 194 / M139)</name>
    <name type="common">Aspergillus nidulans</name>
    <dbReference type="NCBI Taxonomy" id="227321"/>
    <lineage>
        <taxon>Eukaryota</taxon>
        <taxon>Fungi</taxon>
        <taxon>Dikarya</taxon>
        <taxon>Ascomycota</taxon>
        <taxon>Pezizomycotina</taxon>
        <taxon>Eurotiomycetes</taxon>
        <taxon>Eurotiomycetidae</taxon>
        <taxon>Eurotiales</taxon>
        <taxon>Aspergillaceae</taxon>
        <taxon>Aspergillus</taxon>
        <taxon>Aspergillus subgen. Nidulantes</taxon>
    </lineage>
</organism>
<accession>Q5B8L0</accession>
<accession>C8VIK0</accession>